<reference key="1">
    <citation type="journal article" date="2005" name="Infect. Immun.">
        <title>Comparative genomic analysis of Chlamydia trachomatis oculotropic and genitotropic strains.</title>
        <authorList>
            <person name="Carlson J.H."/>
            <person name="Porcella S.F."/>
            <person name="McClarty G."/>
            <person name="Caldwell H.D."/>
        </authorList>
    </citation>
    <scope>NUCLEOTIDE SEQUENCE [LARGE SCALE GENOMIC DNA]</scope>
    <source>
        <strain>ATCC VR-571B / DSM 19440 / HAR-13</strain>
    </source>
</reference>
<comment type="function">
    <text evidence="1">Catalyzes the hydrolysis of UDP-3-O-myristoyl-N-acetylglucosamine to form UDP-3-O-myristoylglucosamine and acetate, the committed step in lipid A biosynthesis.</text>
</comment>
<comment type="catalytic activity">
    <reaction evidence="1">
        <text>a UDP-3-O-[(3R)-3-hydroxyacyl]-N-acetyl-alpha-D-glucosamine + H2O = a UDP-3-O-[(3R)-3-hydroxyacyl]-alpha-D-glucosamine + acetate</text>
        <dbReference type="Rhea" id="RHEA:67816"/>
        <dbReference type="ChEBI" id="CHEBI:15377"/>
        <dbReference type="ChEBI" id="CHEBI:30089"/>
        <dbReference type="ChEBI" id="CHEBI:137740"/>
        <dbReference type="ChEBI" id="CHEBI:173225"/>
        <dbReference type="EC" id="3.5.1.108"/>
    </reaction>
</comment>
<comment type="cofactor">
    <cofactor evidence="1">
        <name>Zn(2+)</name>
        <dbReference type="ChEBI" id="CHEBI:29105"/>
    </cofactor>
</comment>
<comment type="pathway">
    <text evidence="1">Glycolipid biosynthesis; lipid IV(A) biosynthesis; lipid IV(A) from (3R)-3-hydroxytetradecanoyl-[acyl-carrier-protein] and UDP-N-acetyl-alpha-D-glucosamine: step 2/6.</text>
</comment>
<comment type="similarity">
    <text evidence="1">Belongs to the LpxC family.</text>
</comment>
<dbReference type="EC" id="3.5.1.108" evidence="1"/>
<dbReference type="EMBL" id="CP000051">
    <property type="protein sequence ID" value="AAX50808.1"/>
    <property type="molecule type" value="Genomic_DNA"/>
</dbReference>
<dbReference type="RefSeq" id="WP_009871897.1">
    <property type="nucleotide sequence ID" value="NC_007429.1"/>
</dbReference>
<dbReference type="SMR" id="Q3KLG4"/>
<dbReference type="KEGG" id="cta:CTA_0582"/>
<dbReference type="HOGENOM" id="CLU_046528_1_0_0"/>
<dbReference type="UniPathway" id="UPA00359">
    <property type="reaction ID" value="UER00478"/>
</dbReference>
<dbReference type="Proteomes" id="UP000002532">
    <property type="component" value="Chromosome"/>
</dbReference>
<dbReference type="GO" id="GO:0016020">
    <property type="term" value="C:membrane"/>
    <property type="evidence" value="ECO:0007669"/>
    <property type="project" value="GOC"/>
</dbReference>
<dbReference type="GO" id="GO:0046872">
    <property type="term" value="F:metal ion binding"/>
    <property type="evidence" value="ECO:0007669"/>
    <property type="project" value="UniProtKB-KW"/>
</dbReference>
<dbReference type="GO" id="GO:0103117">
    <property type="term" value="F:UDP-3-O-acyl-N-acetylglucosamine deacetylase activity"/>
    <property type="evidence" value="ECO:0007669"/>
    <property type="project" value="UniProtKB-UniRule"/>
</dbReference>
<dbReference type="GO" id="GO:0009245">
    <property type="term" value="P:lipid A biosynthetic process"/>
    <property type="evidence" value="ECO:0007669"/>
    <property type="project" value="UniProtKB-UniRule"/>
</dbReference>
<dbReference type="Gene3D" id="3.30.230.20">
    <property type="entry name" value="lpxc deacetylase, domain 1"/>
    <property type="match status" value="1"/>
</dbReference>
<dbReference type="Gene3D" id="3.30.1700.10">
    <property type="entry name" value="lpxc deacetylase, domain 2"/>
    <property type="match status" value="1"/>
</dbReference>
<dbReference type="HAMAP" id="MF_00388">
    <property type="entry name" value="LpxC"/>
    <property type="match status" value="1"/>
</dbReference>
<dbReference type="InterPro" id="IPR020568">
    <property type="entry name" value="Ribosomal_Su5_D2-typ_SF"/>
</dbReference>
<dbReference type="InterPro" id="IPR004463">
    <property type="entry name" value="UDP-acyl_GlcNac_deAcase"/>
</dbReference>
<dbReference type="InterPro" id="IPR011334">
    <property type="entry name" value="UDP-acyl_GlcNac_deAcase_C"/>
</dbReference>
<dbReference type="InterPro" id="IPR015870">
    <property type="entry name" value="UDP-acyl_N-AcGlcN_deAcase_N"/>
</dbReference>
<dbReference type="NCBIfam" id="TIGR00325">
    <property type="entry name" value="lpxC"/>
    <property type="match status" value="1"/>
</dbReference>
<dbReference type="PANTHER" id="PTHR33694">
    <property type="entry name" value="UDP-3-O-ACYL-N-ACETYLGLUCOSAMINE DEACETYLASE 1, MITOCHONDRIAL-RELATED"/>
    <property type="match status" value="1"/>
</dbReference>
<dbReference type="PANTHER" id="PTHR33694:SF1">
    <property type="entry name" value="UDP-3-O-ACYL-N-ACETYLGLUCOSAMINE DEACETYLASE 1, MITOCHONDRIAL-RELATED"/>
    <property type="match status" value="1"/>
</dbReference>
<dbReference type="Pfam" id="PF03331">
    <property type="entry name" value="LpxC"/>
    <property type="match status" value="1"/>
</dbReference>
<dbReference type="SUPFAM" id="SSF54211">
    <property type="entry name" value="Ribosomal protein S5 domain 2-like"/>
    <property type="match status" value="2"/>
</dbReference>
<accession>Q3KLG4</accession>
<keyword id="KW-0378">Hydrolase</keyword>
<keyword id="KW-0441">Lipid A biosynthesis</keyword>
<keyword id="KW-0444">Lipid biosynthesis</keyword>
<keyword id="KW-0443">Lipid metabolism</keyword>
<keyword id="KW-0479">Metal-binding</keyword>
<keyword id="KW-0862">Zinc</keyword>
<gene>
    <name evidence="1" type="primary">lpxC</name>
    <name type="ordered locus">CTA_0582</name>
</gene>
<sequence length="286" mass="31279">MLGRAQRTLKRKVCYSGVGVHFGKAAMLTLEPAEENTGVVFSHHAASEQYIPARLANVCGTGRSTTLSLDGSVISTVEHLLASLYSFGVDNVRIYCSEDEIPIGDGSAQVFMDLIDQAGIQEQEQTVQIARLAHPVYYQYQDTILAAFPSDEFKISYTLHYSHNSTIGTQYRSLVISEESFRKEIAPCRTFALYSELCFLMEKGLIGGGCVGNAVLFKDDGVISLGKLRFPDEPVRHKILDLIGDLSLVGTPFLAHVIAVGSGHSSNIALGNRILEALQHEQELVK</sequence>
<proteinExistence type="inferred from homology"/>
<organism>
    <name type="scientific">Chlamydia trachomatis serovar A (strain ATCC VR-571B / DSM 19440 / HAR-13)</name>
    <dbReference type="NCBI Taxonomy" id="315277"/>
    <lineage>
        <taxon>Bacteria</taxon>
        <taxon>Pseudomonadati</taxon>
        <taxon>Chlamydiota</taxon>
        <taxon>Chlamydiia</taxon>
        <taxon>Chlamydiales</taxon>
        <taxon>Chlamydiaceae</taxon>
        <taxon>Chlamydia/Chlamydophila group</taxon>
        <taxon>Chlamydia</taxon>
    </lineage>
</organism>
<evidence type="ECO:0000255" key="1">
    <source>
        <dbReference type="HAMAP-Rule" id="MF_00388"/>
    </source>
</evidence>
<protein>
    <recommendedName>
        <fullName evidence="1">UDP-3-O-acyl-N-acetylglucosamine deacetylase</fullName>
        <shortName evidence="1">UDP-3-O-acyl-GlcNAc deacetylase</shortName>
        <ecNumber evidence="1">3.5.1.108</ecNumber>
    </recommendedName>
    <alternativeName>
        <fullName evidence="1">UDP-3-O-[R-3-hydroxymyristoyl]-N-acetylglucosamine deacetylase</fullName>
    </alternativeName>
</protein>
<name>LPXC_CHLTA</name>
<feature type="chain" id="PRO_0000253657" description="UDP-3-O-acyl-N-acetylglucosamine deacetylase">
    <location>
        <begin position="1"/>
        <end position="286"/>
    </location>
</feature>
<feature type="active site" description="Proton donor" evidence="1">
    <location>
        <position position="264"/>
    </location>
</feature>
<feature type="binding site" evidence="1">
    <location>
        <position position="79"/>
    </location>
    <ligand>
        <name>Zn(2+)</name>
        <dbReference type="ChEBI" id="CHEBI:29105"/>
    </ligand>
</feature>
<feature type="binding site" evidence="1">
    <location>
        <position position="237"/>
    </location>
    <ligand>
        <name>Zn(2+)</name>
        <dbReference type="ChEBI" id="CHEBI:29105"/>
    </ligand>
</feature>
<feature type="binding site" evidence="1">
    <location>
        <position position="241"/>
    </location>
    <ligand>
        <name>Zn(2+)</name>
        <dbReference type="ChEBI" id="CHEBI:29105"/>
    </ligand>
</feature>